<name>HPRK_LISIN</name>
<organism>
    <name type="scientific">Listeria innocua serovar 6a (strain ATCC BAA-680 / CLIP 11262)</name>
    <dbReference type="NCBI Taxonomy" id="272626"/>
    <lineage>
        <taxon>Bacteria</taxon>
        <taxon>Bacillati</taxon>
        <taxon>Bacillota</taxon>
        <taxon>Bacilli</taxon>
        <taxon>Bacillales</taxon>
        <taxon>Listeriaceae</taxon>
        <taxon>Listeria</taxon>
    </lineage>
</organism>
<protein>
    <recommendedName>
        <fullName evidence="1">HPr kinase/phosphorylase</fullName>
        <shortName evidence="1">HPrK/P</shortName>
        <ecNumber evidence="1">2.7.11.-</ecNumber>
        <ecNumber evidence="1">2.7.4.-</ecNumber>
    </recommendedName>
    <alternativeName>
        <fullName evidence="1">HPr(Ser) kinase/phosphorylase</fullName>
    </alternativeName>
</protein>
<reference key="1">
    <citation type="journal article" date="2001" name="Science">
        <title>Comparative genomics of Listeria species.</title>
        <authorList>
            <person name="Glaser P."/>
            <person name="Frangeul L."/>
            <person name="Buchrieser C."/>
            <person name="Rusniok C."/>
            <person name="Amend A."/>
            <person name="Baquero F."/>
            <person name="Berche P."/>
            <person name="Bloecker H."/>
            <person name="Brandt P."/>
            <person name="Chakraborty T."/>
            <person name="Charbit A."/>
            <person name="Chetouani F."/>
            <person name="Couve E."/>
            <person name="de Daruvar A."/>
            <person name="Dehoux P."/>
            <person name="Domann E."/>
            <person name="Dominguez-Bernal G."/>
            <person name="Duchaud E."/>
            <person name="Durant L."/>
            <person name="Dussurget O."/>
            <person name="Entian K.-D."/>
            <person name="Fsihi H."/>
            <person name="Garcia-del Portillo F."/>
            <person name="Garrido P."/>
            <person name="Gautier L."/>
            <person name="Goebel W."/>
            <person name="Gomez-Lopez N."/>
            <person name="Hain T."/>
            <person name="Hauf J."/>
            <person name="Jackson D."/>
            <person name="Jones L.-M."/>
            <person name="Kaerst U."/>
            <person name="Kreft J."/>
            <person name="Kuhn M."/>
            <person name="Kunst F."/>
            <person name="Kurapkat G."/>
            <person name="Madueno E."/>
            <person name="Maitournam A."/>
            <person name="Mata Vicente J."/>
            <person name="Ng E."/>
            <person name="Nedjari H."/>
            <person name="Nordsiek G."/>
            <person name="Novella S."/>
            <person name="de Pablos B."/>
            <person name="Perez-Diaz J.-C."/>
            <person name="Purcell R."/>
            <person name="Remmel B."/>
            <person name="Rose M."/>
            <person name="Schlueter T."/>
            <person name="Simoes N."/>
            <person name="Tierrez A."/>
            <person name="Vazquez-Boland J.-A."/>
            <person name="Voss H."/>
            <person name="Wehland J."/>
            <person name="Cossart P."/>
        </authorList>
    </citation>
    <scope>NUCLEOTIDE SEQUENCE [LARGE SCALE GENOMIC DNA]</scope>
    <source>
        <strain>ATCC BAA-680 / CLIP 11262</strain>
    </source>
</reference>
<proteinExistence type="inferred from homology"/>
<accession>Q928B0</accession>
<evidence type="ECO:0000255" key="1">
    <source>
        <dbReference type="HAMAP-Rule" id="MF_01249"/>
    </source>
</evidence>
<dbReference type="EC" id="2.7.11.-" evidence="1"/>
<dbReference type="EC" id="2.7.4.-" evidence="1"/>
<dbReference type="EMBL" id="AL596173">
    <property type="protein sequence ID" value="CAC97853.1"/>
    <property type="molecule type" value="Genomic_DNA"/>
</dbReference>
<dbReference type="PIR" id="AE1760">
    <property type="entry name" value="AE1760"/>
</dbReference>
<dbReference type="RefSeq" id="WP_003763911.1">
    <property type="nucleotide sequence ID" value="NC_003212.1"/>
</dbReference>
<dbReference type="SMR" id="Q928B0"/>
<dbReference type="STRING" id="272626.gene:17567007"/>
<dbReference type="GeneID" id="93235890"/>
<dbReference type="KEGG" id="lin:lin2626"/>
<dbReference type="eggNOG" id="COG1493">
    <property type="taxonomic scope" value="Bacteria"/>
</dbReference>
<dbReference type="HOGENOM" id="CLU_052030_0_1_9"/>
<dbReference type="OrthoDB" id="9778803at2"/>
<dbReference type="Proteomes" id="UP000002513">
    <property type="component" value="Chromosome"/>
</dbReference>
<dbReference type="GO" id="GO:0005524">
    <property type="term" value="F:ATP binding"/>
    <property type="evidence" value="ECO:0007669"/>
    <property type="project" value="UniProtKB-UniRule"/>
</dbReference>
<dbReference type="GO" id="GO:0000287">
    <property type="term" value="F:magnesium ion binding"/>
    <property type="evidence" value="ECO:0007669"/>
    <property type="project" value="UniProtKB-UniRule"/>
</dbReference>
<dbReference type="GO" id="GO:0000155">
    <property type="term" value="F:phosphorelay sensor kinase activity"/>
    <property type="evidence" value="ECO:0007669"/>
    <property type="project" value="InterPro"/>
</dbReference>
<dbReference type="GO" id="GO:0004674">
    <property type="term" value="F:protein serine/threonine kinase activity"/>
    <property type="evidence" value="ECO:0007669"/>
    <property type="project" value="UniProtKB-KW"/>
</dbReference>
<dbReference type="GO" id="GO:0004712">
    <property type="term" value="F:protein serine/threonine/tyrosine kinase activity"/>
    <property type="evidence" value="ECO:0007669"/>
    <property type="project" value="UniProtKB-UniRule"/>
</dbReference>
<dbReference type="GO" id="GO:0006109">
    <property type="term" value="P:regulation of carbohydrate metabolic process"/>
    <property type="evidence" value="ECO:0007669"/>
    <property type="project" value="UniProtKB-UniRule"/>
</dbReference>
<dbReference type="CDD" id="cd01918">
    <property type="entry name" value="HprK_C"/>
    <property type="match status" value="1"/>
</dbReference>
<dbReference type="FunFam" id="3.40.1390.20:FF:000002">
    <property type="entry name" value="HPr kinase/phosphorylase"/>
    <property type="match status" value="1"/>
</dbReference>
<dbReference type="FunFam" id="3.40.50.300:FF:000174">
    <property type="entry name" value="HPr kinase/phosphorylase"/>
    <property type="match status" value="1"/>
</dbReference>
<dbReference type="Gene3D" id="3.40.1390.20">
    <property type="entry name" value="HprK N-terminal domain-like"/>
    <property type="match status" value="1"/>
</dbReference>
<dbReference type="Gene3D" id="3.40.50.300">
    <property type="entry name" value="P-loop containing nucleotide triphosphate hydrolases"/>
    <property type="match status" value="1"/>
</dbReference>
<dbReference type="HAMAP" id="MF_01249">
    <property type="entry name" value="HPr_kinase"/>
    <property type="match status" value="1"/>
</dbReference>
<dbReference type="InterPro" id="IPR003755">
    <property type="entry name" value="HPr(Ser)_kin/Pase"/>
</dbReference>
<dbReference type="InterPro" id="IPR011104">
    <property type="entry name" value="Hpr_kin/Pase_C"/>
</dbReference>
<dbReference type="InterPro" id="IPR011126">
    <property type="entry name" value="Hpr_kin/Pase_Hpr_N"/>
</dbReference>
<dbReference type="InterPro" id="IPR027417">
    <property type="entry name" value="P-loop_NTPase"/>
</dbReference>
<dbReference type="InterPro" id="IPR028979">
    <property type="entry name" value="Ser_kin/Pase_Hpr-like_N_sf"/>
</dbReference>
<dbReference type="NCBIfam" id="TIGR00679">
    <property type="entry name" value="hpr-ser"/>
    <property type="match status" value="1"/>
</dbReference>
<dbReference type="PANTHER" id="PTHR30305:SF1">
    <property type="entry name" value="HPR KINASE_PHOSPHORYLASE"/>
    <property type="match status" value="1"/>
</dbReference>
<dbReference type="PANTHER" id="PTHR30305">
    <property type="entry name" value="PROTEIN YJDM-RELATED"/>
    <property type="match status" value="1"/>
</dbReference>
<dbReference type="Pfam" id="PF07475">
    <property type="entry name" value="Hpr_kinase_C"/>
    <property type="match status" value="1"/>
</dbReference>
<dbReference type="Pfam" id="PF02603">
    <property type="entry name" value="Hpr_kinase_N"/>
    <property type="match status" value="1"/>
</dbReference>
<dbReference type="SUPFAM" id="SSF75138">
    <property type="entry name" value="HprK N-terminal domain-like"/>
    <property type="match status" value="1"/>
</dbReference>
<dbReference type="SUPFAM" id="SSF53795">
    <property type="entry name" value="PEP carboxykinase-like"/>
    <property type="match status" value="1"/>
</dbReference>
<sequence length="312" mass="34976">MTKSVTVKDLKERLNLELICSETGLERPILTSDLSRPGLELTGFFSYYPEDRVQLFGMTEISFSEGMEPEERLKRYKQMCTKRTPAFVISRNLEVPKELVAAAKEADIPVLRSRLKTTRLSVYITNYLESRLAPVISMHGVLVDIYGLGVLITGSSGVGKSETALELVKRGHRLVADDNVEIRQEDEMTLIGSSPAIIEHLLEIRGLGIINVMTLFGAGAVRSSKKITIVVHLENWDPDKHYDRVGLDQEKTKIFDMDIPKITVPVRPGRNLSVIIEVAAMNFRLKNMGYNAAEQFTQDLNNLIGHNSSMND</sequence>
<gene>
    <name evidence="1" type="primary">hprK</name>
    <name type="ordered locus">lin2626</name>
</gene>
<keyword id="KW-0067">ATP-binding</keyword>
<keyword id="KW-0119">Carbohydrate metabolism</keyword>
<keyword id="KW-0418">Kinase</keyword>
<keyword id="KW-0460">Magnesium</keyword>
<keyword id="KW-0479">Metal-binding</keyword>
<keyword id="KW-0511">Multifunctional enzyme</keyword>
<keyword id="KW-0547">Nucleotide-binding</keyword>
<keyword id="KW-0723">Serine/threonine-protein kinase</keyword>
<keyword id="KW-0808">Transferase</keyword>
<feature type="chain" id="PRO_0000058966" description="HPr kinase/phosphorylase">
    <location>
        <begin position="1"/>
        <end position="312"/>
    </location>
</feature>
<feature type="region of interest" description="Important for the catalytic mechanism of both phosphorylation and dephosphorylation" evidence="1">
    <location>
        <begin position="202"/>
        <end position="211"/>
    </location>
</feature>
<feature type="region of interest" description="Important for the catalytic mechanism of dephosphorylation" evidence="1">
    <location>
        <begin position="265"/>
        <end position="270"/>
    </location>
</feature>
<feature type="active site" evidence="1">
    <location>
        <position position="139"/>
    </location>
</feature>
<feature type="active site" evidence="1">
    <location>
        <position position="160"/>
    </location>
</feature>
<feature type="active site" description="Proton acceptor; for phosphorylation activity. Proton donor; for dephosphorylation activity" evidence="1">
    <location>
        <position position="178"/>
    </location>
</feature>
<feature type="active site" evidence="1">
    <location>
        <position position="244"/>
    </location>
</feature>
<feature type="binding site" evidence="1">
    <location>
        <begin position="154"/>
        <end position="161"/>
    </location>
    <ligand>
        <name>ATP</name>
        <dbReference type="ChEBI" id="CHEBI:30616"/>
    </ligand>
</feature>
<feature type="binding site" evidence="1">
    <location>
        <position position="161"/>
    </location>
    <ligand>
        <name>Mg(2+)</name>
        <dbReference type="ChEBI" id="CHEBI:18420"/>
    </ligand>
</feature>
<feature type="binding site" evidence="1">
    <location>
        <position position="203"/>
    </location>
    <ligand>
        <name>Mg(2+)</name>
        <dbReference type="ChEBI" id="CHEBI:18420"/>
    </ligand>
</feature>
<comment type="function">
    <text evidence="1">Catalyzes the ATP- as well as the pyrophosphate-dependent phosphorylation of a specific serine residue in HPr, a phosphocarrier protein of the phosphoenolpyruvate-dependent sugar phosphotransferase system (PTS). HprK/P also catalyzes the pyrophosphate-producing, inorganic phosphate-dependent dephosphorylation (phosphorolysis) of seryl-phosphorylated HPr (P-Ser-HPr). The two antagonistic activities of HprK/P are regulated by several intracellular metabolites, which change their concentration in response to the absence or presence of rapidly metabolisable carbon sources (glucose, fructose, etc.) in the growth medium. Therefore, by controlling the phosphorylation state of HPr, HPrK/P is a sensor enzyme that plays a major role in the regulation of carbon metabolism and sugar transport: it mediates carbon catabolite repression (CCR), and regulates PTS-catalyzed carbohydrate uptake and inducer exclusion.</text>
</comment>
<comment type="catalytic activity">
    <reaction evidence="1">
        <text>[HPr protein]-L-serine + ATP = [HPr protein]-O-phospho-L-serine + ADP + H(+)</text>
        <dbReference type="Rhea" id="RHEA:46600"/>
        <dbReference type="Rhea" id="RHEA-COMP:11602"/>
        <dbReference type="Rhea" id="RHEA-COMP:11603"/>
        <dbReference type="ChEBI" id="CHEBI:15378"/>
        <dbReference type="ChEBI" id="CHEBI:29999"/>
        <dbReference type="ChEBI" id="CHEBI:30616"/>
        <dbReference type="ChEBI" id="CHEBI:83421"/>
        <dbReference type="ChEBI" id="CHEBI:456216"/>
    </reaction>
</comment>
<comment type="catalytic activity">
    <reaction evidence="1">
        <text>[HPr protein]-O-phospho-L-serine + phosphate + H(+) = [HPr protein]-L-serine + diphosphate</text>
        <dbReference type="Rhea" id="RHEA:46604"/>
        <dbReference type="Rhea" id="RHEA-COMP:11602"/>
        <dbReference type="Rhea" id="RHEA-COMP:11603"/>
        <dbReference type="ChEBI" id="CHEBI:15378"/>
        <dbReference type="ChEBI" id="CHEBI:29999"/>
        <dbReference type="ChEBI" id="CHEBI:33019"/>
        <dbReference type="ChEBI" id="CHEBI:43474"/>
        <dbReference type="ChEBI" id="CHEBI:83421"/>
    </reaction>
</comment>
<comment type="cofactor">
    <cofactor evidence="1">
        <name>Mg(2+)</name>
        <dbReference type="ChEBI" id="CHEBI:18420"/>
    </cofactor>
</comment>
<comment type="subunit">
    <text evidence="1">Homohexamer.</text>
</comment>
<comment type="domain">
    <text evidence="1">The Walker A ATP-binding motif also binds Pi and PPi.</text>
</comment>
<comment type="miscellaneous">
    <text evidence="1">Both phosphorylation and phosphorolysis are carried out by the same active site and suggest a common mechanism for both reactions.</text>
</comment>
<comment type="similarity">
    <text evidence="1">Belongs to the HPrK/P family.</text>
</comment>